<accession>K4GHS2</accession>
<sequence length="495" mass="55427">MVSEITHKSYPLHFVLFPFMAQGHMIPMVDIARLLAQRGVKITIVTTPHNAARFENVLNRAIESGLPISIVQVKLPSQEAGLPEGNETFDSLVSMELLVPFFKSVNMLEEPVQKLFEEMSPQPSCIISDFCLPYTSKIAKKFNIPKILFHGMCCFCLLCMHVLRKNHEIVENLKSDKEHFVVPYFPDRVEFTRPQVPVATYVPGDWHEITGDMVEADKTSYGVIVNTCQELEPAYANDYKEARSGKAWTIGPVSLCNKVGADKAERGNKADIDQDECLKWLNSKEEGSVLYVCLGSICNLPLSQLKELGLGLEESQRPFIWVIRGWEKNKELLEWFSESGFEERIKDRGLLIKGWAPQMLILSHHSVGGFLTHCGWNSTLEGLTAGLPLLTWPLFADQFCNEKLAVQVLKAGVSAGVDQPMKWGEEEKIGVLVDKEGVKKAVEELMGESDDAKEIRRRAKELGELAHKAVEEGGSSHSNITSLLEDIMQLAQSNN</sequence>
<keyword id="KW-0328">Glycosyltransferase</keyword>
<keyword id="KW-0808">Transferase</keyword>
<dbReference type="EC" id="2.4.1.368" evidence="3"/>
<dbReference type="EMBL" id="JQ291616">
    <property type="protein sequence ID" value="AFN26669.1"/>
    <property type="molecule type" value="Genomic_DNA"/>
</dbReference>
<dbReference type="SMR" id="K4GHS2"/>
<dbReference type="GO" id="GO:0035251">
    <property type="term" value="F:UDP-glucosyltransferase activity"/>
    <property type="evidence" value="ECO:0000314"/>
    <property type="project" value="UniProtKB"/>
</dbReference>
<dbReference type="GO" id="GO:0016134">
    <property type="term" value="P:saponin metabolic process"/>
    <property type="evidence" value="ECO:0000314"/>
    <property type="project" value="UniProtKB"/>
</dbReference>
<dbReference type="CDD" id="cd03784">
    <property type="entry name" value="GT1_Gtf-like"/>
    <property type="match status" value="1"/>
</dbReference>
<dbReference type="FunFam" id="3.40.50.2000:FF:000047">
    <property type="entry name" value="Glycosyltransferase"/>
    <property type="match status" value="1"/>
</dbReference>
<dbReference type="FunFam" id="3.40.50.2000:FF:000071">
    <property type="entry name" value="Glycosyltransferase"/>
    <property type="match status" value="1"/>
</dbReference>
<dbReference type="Gene3D" id="3.40.50.2000">
    <property type="entry name" value="Glycogen Phosphorylase B"/>
    <property type="match status" value="2"/>
</dbReference>
<dbReference type="InterPro" id="IPR002213">
    <property type="entry name" value="UDP_glucos_trans"/>
</dbReference>
<dbReference type="InterPro" id="IPR035595">
    <property type="entry name" value="UDP_glycos_trans_CS"/>
</dbReference>
<dbReference type="PANTHER" id="PTHR48047">
    <property type="entry name" value="GLYCOSYLTRANSFERASE"/>
    <property type="match status" value="1"/>
</dbReference>
<dbReference type="PANTHER" id="PTHR48047:SF153">
    <property type="entry name" value="UDP-GLYCOSYLTRANSFERASE 73C5-RELATED"/>
    <property type="match status" value="1"/>
</dbReference>
<dbReference type="Pfam" id="PF00201">
    <property type="entry name" value="UDPGT"/>
    <property type="match status" value="1"/>
</dbReference>
<dbReference type="SUPFAM" id="SSF53756">
    <property type="entry name" value="UDP-Glycosyltransferase/glycogen phosphorylase"/>
    <property type="match status" value="1"/>
</dbReference>
<dbReference type="PROSITE" id="PS00375">
    <property type="entry name" value="UDPGT"/>
    <property type="match status" value="1"/>
</dbReference>
<feature type="chain" id="PRO_0000452131" description="UDP-glycosyltransferase 73C13">
    <location>
        <begin position="1"/>
        <end position="495"/>
    </location>
</feature>
<feature type="active site" description="Proton acceptor" evidence="1">
    <location>
        <position position="24"/>
    </location>
</feature>
<feature type="active site" description="Charge relay" evidence="1">
    <location>
        <position position="129"/>
    </location>
</feature>
<feature type="binding site" evidence="2">
    <location>
        <position position="24"/>
    </location>
    <ligand>
        <name>an anthocyanidin</name>
        <dbReference type="ChEBI" id="CHEBI:143576"/>
    </ligand>
</feature>
<feature type="binding site" evidence="1">
    <location>
        <position position="356"/>
    </location>
    <ligand>
        <name>UDP-alpha-D-glucose</name>
        <dbReference type="ChEBI" id="CHEBI:58885"/>
    </ligand>
</feature>
<feature type="binding site" evidence="1">
    <location>
        <position position="358"/>
    </location>
    <ligand>
        <name>UDP-alpha-D-glucose</name>
        <dbReference type="ChEBI" id="CHEBI:58885"/>
    </ligand>
</feature>
<feature type="binding site" evidence="1">
    <location>
        <position position="373"/>
    </location>
    <ligand>
        <name>UDP-alpha-D-glucose</name>
        <dbReference type="ChEBI" id="CHEBI:58885"/>
    </ligand>
</feature>
<feature type="binding site" evidence="1">
    <location>
        <position position="376"/>
    </location>
    <ligand>
        <name>UDP-alpha-D-glucose</name>
        <dbReference type="ChEBI" id="CHEBI:58885"/>
    </ligand>
</feature>
<feature type="binding site" evidence="1">
    <location>
        <position position="377"/>
    </location>
    <ligand>
        <name>UDP-alpha-D-glucose</name>
        <dbReference type="ChEBI" id="CHEBI:58885"/>
    </ligand>
</feature>
<feature type="binding site" evidence="1">
    <location>
        <position position="378"/>
    </location>
    <ligand>
        <name>UDP-alpha-D-glucose</name>
        <dbReference type="ChEBI" id="CHEBI:58885"/>
    </ligand>
</feature>
<feature type="binding site" evidence="1">
    <location>
        <position position="381"/>
    </location>
    <ligand>
        <name>UDP-alpha-D-glucose</name>
        <dbReference type="ChEBI" id="CHEBI:58885"/>
    </ligand>
</feature>
<feature type="binding site" evidence="2">
    <location>
        <position position="396"/>
    </location>
    <ligand>
        <name>an anthocyanidin</name>
        <dbReference type="ChEBI" id="CHEBI:143576"/>
    </ligand>
</feature>
<feature type="binding site" evidence="1">
    <location>
        <position position="397"/>
    </location>
    <ligand>
        <name>UDP-alpha-D-glucose</name>
        <dbReference type="ChEBI" id="CHEBI:58885"/>
    </ligand>
</feature>
<feature type="binding site" evidence="1">
    <location>
        <position position="398"/>
    </location>
    <ligand>
        <name>UDP-alpha-D-glucose</name>
        <dbReference type="ChEBI" id="CHEBI:58885"/>
    </ligand>
</feature>
<comment type="function">
    <text evidence="3">Catalyzes the transfer of a glucose (Glc) moiety from UDP-Glc to the C-3 position of the oleanane sapogenins oleanolate and hederagenin, and to the C-28 carboxylic group of the lupane sapogenin betulinate (PubMed:23027665). The monoglucosylated hederagenin 3-O-beta-D-glucoside is a feeding deterrent of the yellow-striped flea beetle (Phyllotreta nemorum) (PubMed:23027665).</text>
</comment>
<comment type="catalytic activity">
    <reaction evidence="3">
        <text>oleanolate + UDP-alpha-D-glucose = oleanolate 3-O-beta-D-glucoside + UDP + H(+)</text>
        <dbReference type="Rhea" id="RHEA:58024"/>
        <dbReference type="ChEBI" id="CHEBI:15378"/>
        <dbReference type="ChEBI" id="CHEBI:58223"/>
        <dbReference type="ChEBI" id="CHEBI:58885"/>
        <dbReference type="ChEBI" id="CHEBI:82828"/>
        <dbReference type="ChEBI" id="CHEBI:142488"/>
        <dbReference type="EC" id="2.4.1.368"/>
    </reaction>
    <physiologicalReaction direction="left-to-right" evidence="3">
        <dbReference type="Rhea" id="RHEA:58025"/>
    </physiologicalReaction>
</comment>
<comment type="biophysicochemical properties">
    <kinetics>
        <KM evidence="3">7.6 uM for oleanolate</KM>
        <KM evidence="3">22.9 uM for hederagenin</KM>
        <Vmax evidence="3">176.0 nmol/min/mg enzyme with oleanolate as substrate</Vmax>
        <Vmax evidence="3">131.0 nmol/min/mg enzyme with hederagenin as substrate</Vmax>
        <text evidence="3">kcat is 0.816 sec(-1) with oleanolate as substrate (PubMed:23027665). kcat is 0.389 sec(-1) with hederagenin as substrate (PubMed:23027665).</text>
    </kinetics>
    <phDependence>
        <text evidence="3">Optimum pH is 7.9.</text>
    </phDependence>
</comment>
<comment type="similarity">
    <text evidence="5">Belongs to the UDP-glycosyltransferase family.</text>
</comment>
<gene>
    <name evidence="4" type="primary">UGT73C13</name>
</gene>
<evidence type="ECO:0000250" key="1">
    <source>
        <dbReference type="UniProtKB" id="A0A0A1HA03"/>
    </source>
</evidence>
<evidence type="ECO:0000250" key="2">
    <source>
        <dbReference type="UniProtKB" id="P51094"/>
    </source>
</evidence>
<evidence type="ECO:0000269" key="3">
    <source>
    </source>
</evidence>
<evidence type="ECO:0000303" key="4">
    <source>
    </source>
</evidence>
<evidence type="ECO:0000305" key="5"/>
<organism>
    <name type="scientific">Barbarea vulgaris</name>
    <name type="common">Yellow rocket</name>
    <name type="synonym">Erysimum barbarea</name>
    <dbReference type="NCBI Taxonomy" id="50459"/>
    <lineage>
        <taxon>Eukaryota</taxon>
        <taxon>Viridiplantae</taxon>
        <taxon>Streptophyta</taxon>
        <taxon>Embryophyta</taxon>
        <taxon>Tracheophyta</taxon>
        <taxon>Spermatophyta</taxon>
        <taxon>Magnoliopsida</taxon>
        <taxon>eudicotyledons</taxon>
        <taxon>Gunneridae</taxon>
        <taxon>Pentapetalae</taxon>
        <taxon>rosids</taxon>
        <taxon>malvids</taxon>
        <taxon>Brassicales</taxon>
        <taxon>Brassicaceae</taxon>
        <taxon>Cardamineae</taxon>
        <taxon>Barbarea</taxon>
    </lineage>
</organism>
<proteinExistence type="evidence at protein level"/>
<protein>
    <recommendedName>
        <fullName evidence="4">UDP-glycosyltransferase 73C13</fullName>
        <ecNumber evidence="3">2.4.1.368</ecNumber>
    </recommendedName>
    <alternativeName>
        <fullName evidence="5">Oleanolate 3-O-glucosyltransferase UGT73C13</fullName>
    </alternativeName>
</protein>
<reference key="1">
    <citation type="journal article" date="2012" name="Plant Physiol.">
        <title>UDP-glycosyltransferases from the UGT73C subfamily in Barbarea vulgaris catalyze sapogenin 3-O-glucosylation in saponin-mediated insect resistance.</title>
        <authorList>
            <person name="Augustin J.M."/>
            <person name="Drok S."/>
            <person name="Shinoda T."/>
            <person name="Sanmiya K."/>
            <person name="Nielsen J.K."/>
            <person name="Khakimov B."/>
            <person name="Olsen C.E."/>
            <person name="Hansen E.H."/>
            <person name="Kuzina V."/>
            <person name="Ekstrom C.T."/>
            <person name="Hauser T."/>
            <person name="Bak S."/>
        </authorList>
    </citation>
    <scope>NUCLEOTIDE SEQUENCE [GENOMIC DNA]</scope>
    <scope>FUNCTION</scope>
    <scope>CATALYTIC ACTIVITY</scope>
    <scope>BIOPHYSICOCHEMICAL PROPERTIES</scope>
</reference>
<name>73C13_BARVU</name>